<reference key="1">
    <citation type="journal article" date="2006" name="Proc. Natl. Acad. Sci. U.S.A.">
        <title>Molecular genetic anatomy of inter- and intraserotype variation in the human bacterial pathogen group A Streptococcus.</title>
        <authorList>
            <person name="Beres S.B."/>
            <person name="Richter E.W."/>
            <person name="Nagiec M.J."/>
            <person name="Sumby P."/>
            <person name="Porcella S.F."/>
            <person name="DeLeo F.R."/>
            <person name="Musser J.M."/>
        </authorList>
    </citation>
    <scope>NUCLEOTIDE SEQUENCE [LARGE SCALE GENOMIC DNA]</scope>
    <source>
        <strain>MGAS10750</strain>
    </source>
</reference>
<gene>
    <name evidence="2" type="primary">deoD</name>
    <name type="ordered locus">MGAS10750_Spy0791</name>
</gene>
<protein>
    <recommendedName>
        <fullName evidence="2">Purine nucleoside phosphorylase DeoD-type</fullName>
        <shortName evidence="2">PNP</shortName>
        <ecNumber evidence="2">2.4.2.1</ecNumber>
    </recommendedName>
</protein>
<organism>
    <name type="scientific">Streptococcus pyogenes serotype M4 (strain MGAS10750)</name>
    <dbReference type="NCBI Taxonomy" id="370554"/>
    <lineage>
        <taxon>Bacteria</taxon>
        <taxon>Bacillati</taxon>
        <taxon>Bacillota</taxon>
        <taxon>Bacilli</taxon>
        <taxon>Lactobacillales</taxon>
        <taxon>Streptococcaceae</taxon>
        <taxon>Streptococcus</taxon>
    </lineage>
</organism>
<comment type="function">
    <text evidence="2">Catalyzes the reversible phosphorolytic breakdown of the N-glycosidic bond in the beta-(deoxy)ribonucleoside molecules, with the formation of the corresponding free purine bases and pentose-1-phosphate.</text>
</comment>
<comment type="catalytic activity">
    <reaction evidence="2">
        <text>a purine D-ribonucleoside + phosphate = a purine nucleobase + alpha-D-ribose 1-phosphate</text>
        <dbReference type="Rhea" id="RHEA:19805"/>
        <dbReference type="ChEBI" id="CHEBI:26386"/>
        <dbReference type="ChEBI" id="CHEBI:43474"/>
        <dbReference type="ChEBI" id="CHEBI:57720"/>
        <dbReference type="ChEBI" id="CHEBI:142355"/>
        <dbReference type="EC" id="2.4.2.1"/>
    </reaction>
</comment>
<comment type="catalytic activity">
    <reaction evidence="2">
        <text>a purine 2'-deoxy-D-ribonucleoside + phosphate = a purine nucleobase + 2-deoxy-alpha-D-ribose 1-phosphate</text>
        <dbReference type="Rhea" id="RHEA:36431"/>
        <dbReference type="ChEBI" id="CHEBI:26386"/>
        <dbReference type="ChEBI" id="CHEBI:43474"/>
        <dbReference type="ChEBI" id="CHEBI:57259"/>
        <dbReference type="ChEBI" id="CHEBI:142361"/>
        <dbReference type="EC" id="2.4.2.1"/>
    </reaction>
</comment>
<comment type="subunit">
    <text evidence="2">Homohexamer; trimer of homodimers.</text>
</comment>
<comment type="similarity">
    <text evidence="2">Belongs to the PNP/UDP phosphorylase family.</text>
</comment>
<dbReference type="EC" id="2.4.2.1" evidence="2"/>
<dbReference type="EMBL" id="CP000262">
    <property type="protein sequence ID" value="ABF37741.1"/>
    <property type="molecule type" value="Genomic_DNA"/>
</dbReference>
<dbReference type="SMR" id="Q1J733"/>
<dbReference type="KEGG" id="spi:MGAS10750_Spy0791"/>
<dbReference type="HOGENOM" id="CLU_068457_2_0_9"/>
<dbReference type="Proteomes" id="UP000002434">
    <property type="component" value="Chromosome"/>
</dbReference>
<dbReference type="GO" id="GO:0005829">
    <property type="term" value="C:cytosol"/>
    <property type="evidence" value="ECO:0007669"/>
    <property type="project" value="TreeGrafter"/>
</dbReference>
<dbReference type="GO" id="GO:0004731">
    <property type="term" value="F:purine-nucleoside phosphorylase activity"/>
    <property type="evidence" value="ECO:0007669"/>
    <property type="project" value="UniProtKB-UniRule"/>
</dbReference>
<dbReference type="GO" id="GO:0006152">
    <property type="term" value="P:purine nucleoside catabolic process"/>
    <property type="evidence" value="ECO:0007669"/>
    <property type="project" value="TreeGrafter"/>
</dbReference>
<dbReference type="CDD" id="cd09006">
    <property type="entry name" value="PNP_EcPNPI-like"/>
    <property type="match status" value="1"/>
</dbReference>
<dbReference type="Gene3D" id="3.40.50.1580">
    <property type="entry name" value="Nucleoside phosphorylase domain"/>
    <property type="match status" value="1"/>
</dbReference>
<dbReference type="HAMAP" id="MF_01627">
    <property type="entry name" value="Pur_nucleosid_phosp"/>
    <property type="match status" value="1"/>
</dbReference>
<dbReference type="InterPro" id="IPR004402">
    <property type="entry name" value="DeoD-type"/>
</dbReference>
<dbReference type="InterPro" id="IPR018016">
    <property type="entry name" value="Nucleoside_phosphorylase_CS"/>
</dbReference>
<dbReference type="InterPro" id="IPR000845">
    <property type="entry name" value="Nucleoside_phosphorylase_d"/>
</dbReference>
<dbReference type="InterPro" id="IPR035994">
    <property type="entry name" value="Nucleoside_phosphorylase_sf"/>
</dbReference>
<dbReference type="NCBIfam" id="TIGR00107">
    <property type="entry name" value="deoD"/>
    <property type="match status" value="1"/>
</dbReference>
<dbReference type="NCBIfam" id="NF004489">
    <property type="entry name" value="PRK05819.1"/>
    <property type="match status" value="1"/>
</dbReference>
<dbReference type="PANTHER" id="PTHR43691:SF11">
    <property type="entry name" value="FI09636P-RELATED"/>
    <property type="match status" value="1"/>
</dbReference>
<dbReference type="PANTHER" id="PTHR43691">
    <property type="entry name" value="URIDINE PHOSPHORYLASE"/>
    <property type="match status" value="1"/>
</dbReference>
<dbReference type="Pfam" id="PF01048">
    <property type="entry name" value="PNP_UDP_1"/>
    <property type="match status" value="1"/>
</dbReference>
<dbReference type="SUPFAM" id="SSF53167">
    <property type="entry name" value="Purine and uridine phosphorylases"/>
    <property type="match status" value="1"/>
</dbReference>
<dbReference type="PROSITE" id="PS01232">
    <property type="entry name" value="PNP_UDP_1"/>
    <property type="match status" value="1"/>
</dbReference>
<keyword id="KW-0328">Glycosyltransferase</keyword>
<keyword id="KW-0808">Transferase</keyword>
<proteinExistence type="inferred from homology"/>
<feature type="chain" id="PRO_1000186230" description="Purine nucleoside phosphorylase DeoD-type">
    <location>
        <begin position="1"/>
        <end position="237"/>
    </location>
</feature>
<feature type="active site" description="Proton donor" evidence="2">
    <location>
        <position position="204"/>
    </location>
</feature>
<feature type="binding site" evidence="1">
    <location>
        <position position="4"/>
    </location>
    <ligand>
        <name>a purine D-ribonucleoside</name>
        <dbReference type="ChEBI" id="CHEBI:142355"/>
        <note>ligand shared between dimeric partners</note>
    </ligand>
</feature>
<feature type="binding site" description="in other chain" evidence="1">
    <location>
        <position position="20"/>
    </location>
    <ligand>
        <name>phosphate</name>
        <dbReference type="ChEBI" id="CHEBI:43474"/>
        <note>ligand shared between dimeric partners</note>
    </ligand>
</feature>
<feature type="binding site" description="in other chain" evidence="1">
    <location>
        <position position="24"/>
    </location>
    <ligand>
        <name>phosphate</name>
        <dbReference type="ChEBI" id="CHEBI:43474"/>
        <note>ligand shared between dimeric partners</note>
    </ligand>
</feature>
<feature type="binding site" evidence="1">
    <location>
        <position position="43"/>
    </location>
    <ligand>
        <name>phosphate</name>
        <dbReference type="ChEBI" id="CHEBI:43474"/>
        <note>ligand shared between dimeric partners</note>
    </ligand>
</feature>
<feature type="binding site" description="in other chain" evidence="1">
    <location>
        <begin position="87"/>
        <end position="90"/>
    </location>
    <ligand>
        <name>phosphate</name>
        <dbReference type="ChEBI" id="CHEBI:43474"/>
        <note>ligand shared between dimeric partners</note>
    </ligand>
</feature>
<feature type="binding site" description="in other chain" evidence="1">
    <location>
        <begin position="179"/>
        <end position="181"/>
    </location>
    <ligand>
        <name>a purine D-ribonucleoside</name>
        <dbReference type="ChEBI" id="CHEBI:142355"/>
        <note>ligand shared between dimeric partners</note>
    </ligand>
</feature>
<feature type="binding site" description="in other chain" evidence="1">
    <location>
        <begin position="203"/>
        <end position="204"/>
    </location>
    <ligand>
        <name>a purine D-ribonucleoside</name>
        <dbReference type="ChEBI" id="CHEBI:142355"/>
        <note>ligand shared between dimeric partners</note>
    </ligand>
</feature>
<feature type="site" description="Important for catalytic activity" evidence="2">
    <location>
        <position position="218"/>
    </location>
</feature>
<name>DEOD_STRPF</name>
<evidence type="ECO:0000250" key="1">
    <source>
        <dbReference type="UniProtKB" id="P50389"/>
    </source>
</evidence>
<evidence type="ECO:0000255" key="2">
    <source>
        <dbReference type="HAMAP-Rule" id="MF_01627"/>
    </source>
</evidence>
<sequence>MSIHISAKKGDIADKILLPGDPLRAKFIAENFLEDAVCFNEVRNMFGYTGTYKGHRVSVMGTGMGMPSISIYARELIVDYGVKTLIRVGTAGAIDPEVHVRELVLAQAAATNSNIIRNDFPEFDFPQIADFGLLDKAYHIAREMGVTTHVGNVLSSDVFYTNMPERNMVLGKLGVKAIEMEAAALYYLAAQHHVKALGIMTISDNLNDPTEDTTAEERQTTFTDMMKIGLETLIAND</sequence>
<accession>Q1J733</accession>